<evidence type="ECO:0000255" key="1">
    <source>
        <dbReference type="HAMAP-Rule" id="MF_00746"/>
    </source>
</evidence>
<comment type="cofactor">
    <cofactor evidence="1">
        <name>Zn(2+)</name>
        <dbReference type="ChEBI" id="CHEBI:29105"/>
    </cofactor>
    <text evidence="1">Binds 1 zinc ion.</text>
</comment>
<comment type="subcellular location">
    <subcellularLocation>
        <location evidence="1">Cytoplasm</location>
    </subcellularLocation>
</comment>
<comment type="similarity">
    <text evidence="1">Belongs to the SprT family.</text>
</comment>
<feature type="chain" id="PRO_1000212841" description="Protein SprT">
    <location>
        <begin position="1"/>
        <end position="170"/>
    </location>
</feature>
<feature type="domain" description="SprT-like" evidence="1">
    <location>
        <begin position="22"/>
        <end position="163"/>
    </location>
</feature>
<feature type="active site" evidence="1">
    <location>
        <position position="79"/>
    </location>
</feature>
<feature type="binding site" evidence="1">
    <location>
        <position position="78"/>
    </location>
    <ligand>
        <name>Zn(2+)</name>
        <dbReference type="ChEBI" id="CHEBI:29105"/>
    </ligand>
</feature>
<feature type="binding site" evidence="1">
    <location>
        <position position="82"/>
    </location>
    <ligand>
        <name>Zn(2+)</name>
        <dbReference type="ChEBI" id="CHEBI:29105"/>
    </ligand>
</feature>
<proteinExistence type="inferred from homology"/>
<gene>
    <name evidence="1" type="primary">sprT</name>
    <name type="ordered locus">PC1_3708</name>
</gene>
<protein>
    <recommendedName>
        <fullName evidence="1">Protein SprT</fullName>
    </recommendedName>
</protein>
<name>SPRT_PECCP</name>
<sequence>MNTPRIPIASHQAVMRCLRDKLQQANLTLQTDYTEPTVSYQQRGATAGTAWLQHWEIRLNPVLLQENQQAFIDEVVPHELAHLLVYARFGRVAPHGKEWRWMMESVLRVPAKRTHRFAVQSVQGKTFTYLCDCQRHELTIRRHNRVLRGETEYRCRRCGKTLRHDVKSSI</sequence>
<reference key="1">
    <citation type="submission" date="2009-07" db="EMBL/GenBank/DDBJ databases">
        <title>Complete sequence of Pectobacterium carotovorum subsp. carotovorum PC1.</title>
        <authorList>
            <consortium name="US DOE Joint Genome Institute"/>
            <person name="Lucas S."/>
            <person name="Copeland A."/>
            <person name="Lapidus A."/>
            <person name="Glavina del Rio T."/>
            <person name="Tice H."/>
            <person name="Bruce D."/>
            <person name="Goodwin L."/>
            <person name="Pitluck S."/>
            <person name="Munk A.C."/>
            <person name="Brettin T."/>
            <person name="Detter J.C."/>
            <person name="Han C."/>
            <person name="Tapia R."/>
            <person name="Larimer F."/>
            <person name="Land M."/>
            <person name="Hauser L."/>
            <person name="Kyrpides N."/>
            <person name="Mikhailova N."/>
            <person name="Balakrishnan V."/>
            <person name="Glasner J."/>
            <person name="Perna N.T."/>
        </authorList>
    </citation>
    <scope>NUCLEOTIDE SEQUENCE [LARGE SCALE GENOMIC DNA]</scope>
    <source>
        <strain>PC1</strain>
    </source>
</reference>
<keyword id="KW-0963">Cytoplasm</keyword>
<keyword id="KW-0479">Metal-binding</keyword>
<keyword id="KW-0862">Zinc</keyword>
<dbReference type="EMBL" id="CP001657">
    <property type="protein sequence ID" value="ACT14723.1"/>
    <property type="molecule type" value="Genomic_DNA"/>
</dbReference>
<dbReference type="RefSeq" id="WP_015841837.1">
    <property type="nucleotide sequence ID" value="NC_012917.1"/>
</dbReference>
<dbReference type="SMR" id="C6DFI4"/>
<dbReference type="STRING" id="561230.PC1_3708"/>
<dbReference type="KEGG" id="pct:PC1_3708"/>
<dbReference type="eggNOG" id="COG3091">
    <property type="taxonomic scope" value="Bacteria"/>
</dbReference>
<dbReference type="HOGENOM" id="CLU_113336_0_1_6"/>
<dbReference type="OrthoDB" id="267364at2"/>
<dbReference type="Proteomes" id="UP000002736">
    <property type="component" value="Chromosome"/>
</dbReference>
<dbReference type="GO" id="GO:0005737">
    <property type="term" value="C:cytoplasm"/>
    <property type="evidence" value="ECO:0007669"/>
    <property type="project" value="UniProtKB-SubCell"/>
</dbReference>
<dbReference type="GO" id="GO:0008270">
    <property type="term" value="F:zinc ion binding"/>
    <property type="evidence" value="ECO:0007669"/>
    <property type="project" value="UniProtKB-UniRule"/>
</dbReference>
<dbReference type="GO" id="GO:0006950">
    <property type="term" value="P:response to stress"/>
    <property type="evidence" value="ECO:0007669"/>
    <property type="project" value="UniProtKB-ARBA"/>
</dbReference>
<dbReference type="HAMAP" id="MF_00746">
    <property type="entry name" value="SprT"/>
    <property type="match status" value="1"/>
</dbReference>
<dbReference type="InterPro" id="IPR006640">
    <property type="entry name" value="SprT-like_domain"/>
</dbReference>
<dbReference type="InterPro" id="IPR035240">
    <property type="entry name" value="SprT_Zn_ribbon"/>
</dbReference>
<dbReference type="InterPro" id="IPR023483">
    <property type="entry name" value="Uncharacterised_SprT"/>
</dbReference>
<dbReference type="NCBIfam" id="NF003421">
    <property type="entry name" value="PRK04860.1"/>
    <property type="match status" value="1"/>
</dbReference>
<dbReference type="PANTHER" id="PTHR38773">
    <property type="entry name" value="PROTEIN SPRT"/>
    <property type="match status" value="1"/>
</dbReference>
<dbReference type="PANTHER" id="PTHR38773:SF1">
    <property type="entry name" value="PROTEIN SPRT"/>
    <property type="match status" value="1"/>
</dbReference>
<dbReference type="Pfam" id="PF10263">
    <property type="entry name" value="SprT-like"/>
    <property type="match status" value="1"/>
</dbReference>
<dbReference type="Pfam" id="PF17283">
    <property type="entry name" value="Zn_ribbon_SprT"/>
    <property type="match status" value="1"/>
</dbReference>
<dbReference type="SMART" id="SM00731">
    <property type="entry name" value="SprT"/>
    <property type="match status" value="1"/>
</dbReference>
<dbReference type="PROSITE" id="PS00142">
    <property type="entry name" value="ZINC_PROTEASE"/>
    <property type="match status" value="1"/>
</dbReference>
<organism>
    <name type="scientific">Pectobacterium carotovorum subsp. carotovorum (strain PC1)</name>
    <dbReference type="NCBI Taxonomy" id="561230"/>
    <lineage>
        <taxon>Bacteria</taxon>
        <taxon>Pseudomonadati</taxon>
        <taxon>Pseudomonadota</taxon>
        <taxon>Gammaproteobacteria</taxon>
        <taxon>Enterobacterales</taxon>
        <taxon>Pectobacteriaceae</taxon>
        <taxon>Pectobacterium</taxon>
    </lineage>
</organism>
<accession>C6DFI4</accession>